<accession>Q0SQG0</accession>
<reference key="1">
    <citation type="journal article" date="2006" name="Genome Res.">
        <title>Skewed genomic variability in strains of the toxigenic bacterial pathogen, Clostridium perfringens.</title>
        <authorList>
            <person name="Myers G.S.A."/>
            <person name="Rasko D.A."/>
            <person name="Cheung J.K."/>
            <person name="Ravel J."/>
            <person name="Seshadri R."/>
            <person name="DeBoy R.T."/>
            <person name="Ren Q."/>
            <person name="Varga J."/>
            <person name="Awad M.M."/>
            <person name="Brinkac L.M."/>
            <person name="Daugherty S.C."/>
            <person name="Haft D.H."/>
            <person name="Dodson R.J."/>
            <person name="Madupu R."/>
            <person name="Nelson W.C."/>
            <person name="Rosovitz M.J."/>
            <person name="Sullivan S.A."/>
            <person name="Khouri H."/>
            <person name="Dimitrov G.I."/>
            <person name="Watkins K.L."/>
            <person name="Mulligan S."/>
            <person name="Benton J."/>
            <person name="Radune D."/>
            <person name="Fisher D.J."/>
            <person name="Atkins H.S."/>
            <person name="Hiscox T."/>
            <person name="Jost B.H."/>
            <person name="Billington S.J."/>
            <person name="Songer J.G."/>
            <person name="McClane B.A."/>
            <person name="Titball R.W."/>
            <person name="Rood J.I."/>
            <person name="Melville S.B."/>
            <person name="Paulsen I.T."/>
        </authorList>
    </citation>
    <scope>NUCLEOTIDE SEQUENCE [LARGE SCALE GENOMIC DNA]</scope>
    <source>
        <strain>SM101 / Type A</strain>
    </source>
</reference>
<keyword id="KW-0687">Ribonucleoprotein</keyword>
<keyword id="KW-0689">Ribosomal protein</keyword>
<keyword id="KW-0694">RNA-binding</keyword>
<keyword id="KW-0699">rRNA-binding</keyword>
<protein>
    <recommendedName>
        <fullName evidence="1">Large ribosomal subunit protein uL18</fullName>
    </recommendedName>
    <alternativeName>
        <fullName evidence="2">50S ribosomal protein L18</fullName>
    </alternativeName>
</protein>
<name>RL18_CLOPS</name>
<comment type="function">
    <text evidence="1">This is one of the proteins that bind and probably mediate the attachment of the 5S RNA into the large ribosomal subunit, where it forms part of the central protuberance.</text>
</comment>
<comment type="subunit">
    <text evidence="1">Part of the 50S ribosomal subunit; part of the 5S rRNA/L5/L18/L25 subcomplex. Contacts the 5S and 23S rRNAs.</text>
</comment>
<comment type="similarity">
    <text evidence="1">Belongs to the universal ribosomal protein uL18 family.</text>
</comment>
<dbReference type="EMBL" id="CP000312">
    <property type="protein sequence ID" value="ABG87658.1"/>
    <property type="molecule type" value="Genomic_DNA"/>
</dbReference>
<dbReference type="RefSeq" id="WP_003454424.1">
    <property type="nucleotide sequence ID" value="NZ_CAXVKH010000004.1"/>
</dbReference>
<dbReference type="SMR" id="Q0SQG0"/>
<dbReference type="GeneID" id="93001025"/>
<dbReference type="KEGG" id="cpr:CPR_2383"/>
<dbReference type="Proteomes" id="UP000001824">
    <property type="component" value="Chromosome"/>
</dbReference>
<dbReference type="GO" id="GO:0022625">
    <property type="term" value="C:cytosolic large ribosomal subunit"/>
    <property type="evidence" value="ECO:0007669"/>
    <property type="project" value="TreeGrafter"/>
</dbReference>
<dbReference type="GO" id="GO:0008097">
    <property type="term" value="F:5S rRNA binding"/>
    <property type="evidence" value="ECO:0007669"/>
    <property type="project" value="TreeGrafter"/>
</dbReference>
<dbReference type="GO" id="GO:0003735">
    <property type="term" value="F:structural constituent of ribosome"/>
    <property type="evidence" value="ECO:0007669"/>
    <property type="project" value="InterPro"/>
</dbReference>
<dbReference type="GO" id="GO:0006412">
    <property type="term" value="P:translation"/>
    <property type="evidence" value="ECO:0007669"/>
    <property type="project" value="UniProtKB-UniRule"/>
</dbReference>
<dbReference type="CDD" id="cd00432">
    <property type="entry name" value="Ribosomal_L18_L5e"/>
    <property type="match status" value="1"/>
</dbReference>
<dbReference type="FunFam" id="3.30.420.100:FF:000001">
    <property type="entry name" value="50S ribosomal protein L18"/>
    <property type="match status" value="1"/>
</dbReference>
<dbReference type="Gene3D" id="3.30.420.100">
    <property type="match status" value="1"/>
</dbReference>
<dbReference type="HAMAP" id="MF_01337_B">
    <property type="entry name" value="Ribosomal_uL18_B"/>
    <property type="match status" value="1"/>
</dbReference>
<dbReference type="InterPro" id="IPR004389">
    <property type="entry name" value="Ribosomal_uL18_bac-type"/>
</dbReference>
<dbReference type="InterPro" id="IPR005484">
    <property type="entry name" value="Ribosomal_uL18_bac/euk"/>
</dbReference>
<dbReference type="NCBIfam" id="TIGR00060">
    <property type="entry name" value="L18_bact"/>
    <property type="match status" value="1"/>
</dbReference>
<dbReference type="PANTHER" id="PTHR12899">
    <property type="entry name" value="39S RIBOSOMAL PROTEIN L18, MITOCHONDRIAL"/>
    <property type="match status" value="1"/>
</dbReference>
<dbReference type="PANTHER" id="PTHR12899:SF3">
    <property type="entry name" value="LARGE RIBOSOMAL SUBUNIT PROTEIN UL18M"/>
    <property type="match status" value="1"/>
</dbReference>
<dbReference type="Pfam" id="PF00861">
    <property type="entry name" value="Ribosomal_L18p"/>
    <property type="match status" value="1"/>
</dbReference>
<dbReference type="SUPFAM" id="SSF53137">
    <property type="entry name" value="Translational machinery components"/>
    <property type="match status" value="1"/>
</dbReference>
<feature type="chain" id="PRO_1000053018" description="Large ribosomal subunit protein uL18">
    <location>
        <begin position="1"/>
        <end position="119"/>
    </location>
</feature>
<proteinExistence type="inferred from homology"/>
<gene>
    <name evidence="1" type="primary">rplR</name>
    <name type="ordered locus">CPR_2383</name>
</gene>
<organism>
    <name type="scientific">Clostridium perfringens (strain SM101 / Type A)</name>
    <dbReference type="NCBI Taxonomy" id="289380"/>
    <lineage>
        <taxon>Bacteria</taxon>
        <taxon>Bacillati</taxon>
        <taxon>Bacillota</taxon>
        <taxon>Clostridia</taxon>
        <taxon>Eubacteriales</taxon>
        <taxon>Clostridiaceae</taxon>
        <taxon>Clostridium</taxon>
    </lineage>
</organism>
<sequence>MFKKADRKEARERRHLRVRKKVFGTPERPRLSVYRSEKNIYAQIIDDVNAVTLVAASSLDKAIEVKGSNKEAAKLVGELVAKRAIEKGINDVVFDRGGYVYHGRVEALASGAREAGLKF</sequence>
<evidence type="ECO:0000255" key="1">
    <source>
        <dbReference type="HAMAP-Rule" id="MF_01337"/>
    </source>
</evidence>
<evidence type="ECO:0000305" key="2"/>